<name>RS16_LISW6</name>
<proteinExistence type="inferred from homology"/>
<feature type="chain" id="PRO_1000049284" description="Small ribosomal subunit protein bS16">
    <location>
        <begin position="1"/>
        <end position="90"/>
    </location>
</feature>
<keyword id="KW-0687">Ribonucleoprotein</keyword>
<keyword id="KW-0689">Ribosomal protein</keyword>
<reference key="1">
    <citation type="journal article" date="2006" name="J. Bacteriol.">
        <title>Whole-genome sequence of Listeria welshimeri reveals common steps in genome reduction with Listeria innocua as compared to Listeria monocytogenes.</title>
        <authorList>
            <person name="Hain T."/>
            <person name="Steinweg C."/>
            <person name="Kuenne C.T."/>
            <person name="Billion A."/>
            <person name="Ghai R."/>
            <person name="Chatterjee S.S."/>
            <person name="Domann E."/>
            <person name="Kaerst U."/>
            <person name="Goesmann A."/>
            <person name="Bekel T."/>
            <person name="Bartels D."/>
            <person name="Kaiser O."/>
            <person name="Meyer F."/>
            <person name="Puehler A."/>
            <person name="Weisshaar B."/>
            <person name="Wehland J."/>
            <person name="Liang C."/>
            <person name="Dandekar T."/>
            <person name="Lampidis R."/>
            <person name="Kreft J."/>
            <person name="Goebel W."/>
            <person name="Chakraborty T."/>
        </authorList>
    </citation>
    <scope>NUCLEOTIDE SEQUENCE [LARGE SCALE GENOMIC DNA]</scope>
    <source>
        <strain>ATCC 35897 / DSM 20650 / CCUG 15529 / CIP 8149 / NCTC 11857 / SLCC 5334 / V8</strain>
    </source>
</reference>
<dbReference type="EMBL" id="AM263198">
    <property type="protein sequence ID" value="CAK21234.1"/>
    <property type="molecule type" value="Genomic_DNA"/>
</dbReference>
<dbReference type="RefSeq" id="WP_003720111.1">
    <property type="nucleotide sequence ID" value="NC_008555.1"/>
</dbReference>
<dbReference type="SMR" id="A0AJQ2"/>
<dbReference type="STRING" id="386043.lwe1816"/>
<dbReference type="GeneID" id="93239707"/>
<dbReference type="KEGG" id="lwe:lwe1816"/>
<dbReference type="eggNOG" id="COG0228">
    <property type="taxonomic scope" value="Bacteria"/>
</dbReference>
<dbReference type="HOGENOM" id="CLU_100590_5_0_9"/>
<dbReference type="OrthoDB" id="9807878at2"/>
<dbReference type="Proteomes" id="UP000000779">
    <property type="component" value="Chromosome"/>
</dbReference>
<dbReference type="GO" id="GO:0005737">
    <property type="term" value="C:cytoplasm"/>
    <property type="evidence" value="ECO:0007669"/>
    <property type="project" value="UniProtKB-ARBA"/>
</dbReference>
<dbReference type="GO" id="GO:0015935">
    <property type="term" value="C:small ribosomal subunit"/>
    <property type="evidence" value="ECO:0007669"/>
    <property type="project" value="TreeGrafter"/>
</dbReference>
<dbReference type="GO" id="GO:0003735">
    <property type="term" value="F:structural constituent of ribosome"/>
    <property type="evidence" value="ECO:0007669"/>
    <property type="project" value="InterPro"/>
</dbReference>
<dbReference type="GO" id="GO:0006412">
    <property type="term" value="P:translation"/>
    <property type="evidence" value="ECO:0007669"/>
    <property type="project" value="UniProtKB-UniRule"/>
</dbReference>
<dbReference type="FunFam" id="3.30.1320.10:FF:000002">
    <property type="entry name" value="30S ribosomal protein S16"/>
    <property type="match status" value="1"/>
</dbReference>
<dbReference type="Gene3D" id="3.30.1320.10">
    <property type="match status" value="1"/>
</dbReference>
<dbReference type="HAMAP" id="MF_00385">
    <property type="entry name" value="Ribosomal_bS16"/>
    <property type="match status" value="1"/>
</dbReference>
<dbReference type="InterPro" id="IPR000307">
    <property type="entry name" value="Ribosomal_bS16"/>
</dbReference>
<dbReference type="InterPro" id="IPR023803">
    <property type="entry name" value="Ribosomal_bS16_dom_sf"/>
</dbReference>
<dbReference type="NCBIfam" id="TIGR00002">
    <property type="entry name" value="S16"/>
    <property type="match status" value="1"/>
</dbReference>
<dbReference type="PANTHER" id="PTHR12919">
    <property type="entry name" value="30S RIBOSOMAL PROTEIN S16"/>
    <property type="match status" value="1"/>
</dbReference>
<dbReference type="PANTHER" id="PTHR12919:SF20">
    <property type="entry name" value="SMALL RIBOSOMAL SUBUNIT PROTEIN BS16M"/>
    <property type="match status" value="1"/>
</dbReference>
<dbReference type="Pfam" id="PF00886">
    <property type="entry name" value="Ribosomal_S16"/>
    <property type="match status" value="1"/>
</dbReference>
<dbReference type="SUPFAM" id="SSF54565">
    <property type="entry name" value="Ribosomal protein S16"/>
    <property type="match status" value="1"/>
</dbReference>
<protein>
    <recommendedName>
        <fullName evidence="1">Small ribosomal subunit protein bS16</fullName>
    </recommendedName>
    <alternativeName>
        <fullName evidence="2">30S ribosomal protein S16</fullName>
    </alternativeName>
</protein>
<organism>
    <name type="scientific">Listeria welshimeri serovar 6b (strain ATCC 35897 / DSM 20650 / CCUG 15529 / CIP 8149 / NCTC 11857 / SLCC 5334 / V8)</name>
    <dbReference type="NCBI Taxonomy" id="386043"/>
    <lineage>
        <taxon>Bacteria</taxon>
        <taxon>Bacillati</taxon>
        <taxon>Bacillota</taxon>
        <taxon>Bacilli</taxon>
        <taxon>Bacillales</taxon>
        <taxon>Listeriaceae</taxon>
        <taxon>Listeria</taxon>
    </lineage>
</organism>
<accession>A0AJQ2</accession>
<evidence type="ECO:0000255" key="1">
    <source>
        <dbReference type="HAMAP-Rule" id="MF_00385"/>
    </source>
</evidence>
<evidence type="ECO:0000305" key="2"/>
<sequence length="90" mass="10365">MAVKIRLKRIGSKKKPFYRIVVADSRFPRDGRSIETIGTYNPLLDPVEVKIDEEATLKWMHNGAKPSDTVRNLLSREGIMEKFHNQKLGK</sequence>
<comment type="similarity">
    <text evidence="1">Belongs to the bacterial ribosomal protein bS16 family.</text>
</comment>
<gene>
    <name evidence="1" type="primary">rpsP</name>
    <name type="ordered locus">lwe1816</name>
</gene>